<reference key="1">
    <citation type="journal article" date="1992" name="Gene">
        <title>Cloning and sequence analysis of the Mucor circinelloides pyrG gene encoding orotidine-5'-monophosphate decarboxylase: use of pyrG for homologous transformation.</title>
        <authorList>
            <person name="Benito E.P."/>
            <person name="Diaz-Minguez J.M."/>
            <person name="Iturriaga E.A."/>
            <person name="Campuzano V."/>
            <person name="Eslava A.P."/>
        </authorList>
    </citation>
    <scope>NUCLEOTIDE SEQUENCE [GENOMIC DNA]</scope>
    <source>
        <strain>ATCC 1216b / BCRC 32522 / CBS 277.49 / NRRL 3631</strain>
    </source>
</reference>
<protein>
    <recommendedName>
        <fullName>Orotidine 5'-phosphate decarboxylase</fullName>
        <ecNumber>4.1.1.23</ecNumber>
    </recommendedName>
    <alternativeName>
        <fullName>OMP decarboxylase</fullName>
        <shortName>OMPDCase</shortName>
        <shortName>OMPdecase</shortName>
    </alternativeName>
    <alternativeName>
        <fullName>Uridine 5'-monophosphate synthase</fullName>
        <shortName>UMP synthase</shortName>
    </alternativeName>
</protein>
<accession>P32431</accession>
<organism>
    <name type="scientific">Mucor circinelloides f. lusitanicus</name>
    <name type="common">Mucor racemosus var. lusitanicus</name>
    <dbReference type="NCBI Taxonomy" id="29924"/>
    <lineage>
        <taxon>Eukaryota</taxon>
        <taxon>Fungi</taxon>
        <taxon>Fungi incertae sedis</taxon>
        <taxon>Mucoromycota</taxon>
        <taxon>Mucoromycotina</taxon>
        <taxon>Mucoromycetes</taxon>
        <taxon>Mucorales</taxon>
        <taxon>Mucorineae</taxon>
        <taxon>Mucoraceae</taxon>
        <taxon>Mucor</taxon>
    </lineage>
</organism>
<proteinExistence type="inferred from homology"/>
<gene>
    <name type="primary">pyrG</name>
</gene>
<comment type="catalytic activity">
    <reaction evidence="2">
        <text>orotidine 5'-phosphate + H(+) = UMP + CO2</text>
        <dbReference type="Rhea" id="RHEA:11596"/>
        <dbReference type="ChEBI" id="CHEBI:15378"/>
        <dbReference type="ChEBI" id="CHEBI:16526"/>
        <dbReference type="ChEBI" id="CHEBI:57538"/>
        <dbReference type="ChEBI" id="CHEBI:57865"/>
        <dbReference type="EC" id="4.1.1.23"/>
    </reaction>
</comment>
<comment type="pathway">
    <text>Pyrimidine metabolism; UMP biosynthesis via de novo pathway; UMP from orotate: step 2/2.</text>
</comment>
<comment type="similarity">
    <text evidence="3">Belongs to the OMP decarboxylase family.</text>
</comment>
<dbReference type="EC" id="4.1.1.23"/>
<dbReference type="EMBL" id="M69112">
    <property type="status" value="NOT_ANNOTATED_CDS"/>
    <property type="molecule type" value="Genomic_DNA"/>
</dbReference>
<dbReference type="SMR" id="P32431"/>
<dbReference type="UniPathway" id="UPA00070">
    <property type="reaction ID" value="UER00120"/>
</dbReference>
<dbReference type="GO" id="GO:0004588">
    <property type="term" value="F:orotate phosphoribosyltransferase activity"/>
    <property type="evidence" value="ECO:0007669"/>
    <property type="project" value="TreeGrafter"/>
</dbReference>
<dbReference type="GO" id="GO:0004590">
    <property type="term" value="F:orotidine-5'-phosphate decarboxylase activity"/>
    <property type="evidence" value="ECO:0007669"/>
    <property type="project" value="UniProtKB-EC"/>
</dbReference>
<dbReference type="GO" id="GO:0006207">
    <property type="term" value="P:'de novo' pyrimidine nucleobase biosynthetic process"/>
    <property type="evidence" value="ECO:0007669"/>
    <property type="project" value="InterPro"/>
</dbReference>
<dbReference type="GO" id="GO:0044205">
    <property type="term" value="P:'de novo' UMP biosynthetic process"/>
    <property type="evidence" value="ECO:0007669"/>
    <property type="project" value="UniProtKB-UniPathway"/>
</dbReference>
<dbReference type="CDD" id="cd04725">
    <property type="entry name" value="OMP_decarboxylase_like"/>
    <property type="match status" value="1"/>
</dbReference>
<dbReference type="FunFam" id="3.20.20.70:FF:000114">
    <property type="entry name" value="Decarboxylase,orotidine phosphate"/>
    <property type="match status" value="1"/>
</dbReference>
<dbReference type="Gene3D" id="3.20.20.70">
    <property type="entry name" value="Aldolase class I"/>
    <property type="match status" value="1"/>
</dbReference>
<dbReference type="InterPro" id="IPR013785">
    <property type="entry name" value="Aldolase_TIM"/>
</dbReference>
<dbReference type="InterPro" id="IPR014732">
    <property type="entry name" value="OMPdecase"/>
</dbReference>
<dbReference type="InterPro" id="IPR018089">
    <property type="entry name" value="OMPdecase_AS"/>
</dbReference>
<dbReference type="InterPro" id="IPR001754">
    <property type="entry name" value="OMPdeCOase_dom"/>
</dbReference>
<dbReference type="InterPro" id="IPR011060">
    <property type="entry name" value="RibuloseP-bd_barrel"/>
</dbReference>
<dbReference type="NCBIfam" id="TIGR01740">
    <property type="entry name" value="pyrF"/>
    <property type="match status" value="1"/>
</dbReference>
<dbReference type="PANTHER" id="PTHR19278">
    <property type="entry name" value="OROTATE PHOSPHORIBOSYLTRANSFERASE"/>
    <property type="match status" value="1"/>
</dbReference>
<dbReference type="PANTHER" id="PTHR19278:SF9">
    <property type="entry name" value="URIDINE 5'-MONOPHOSPHATE SYNTHASE"/>
    <property type="match status" value="1"/>
</dbReference>
<dbReference type="Pfam" id="PF00215">
    <property type="entry name" value="OMPdecase"/>
    <property type="match status" value="1"/>
</dbReference>
<dbReference type="SMART" id="SM00934">
    <property type="entry name" value="OMPdecase"/>
    <property type="match status" value="1"/>
</dbReference>
<dbReference type="SUPFAM" id="SSF51366">
    <property type="entry name" value="Ribulose-phoshate binding barrel"/>
    <property type="match status" value="1"/>
</dbReference>
<dbReference type="PROSITE" id="PS00156">
    <property type="entry name" value="OMPDECASE"/>
    <property type="match status" value="1"/>
</dbReference>
<sequence length="265" mass="29514">MNTYKTYSERGQQHPNACARSLFELMERNESNLSVAVDVTTKKELLSIADAVGPFVCVLKTHIDIVEDFDHDLVAQLEQLAKKHDFLIFEDRKFADIGNTVKHQYANGIYKIASWSHITNAHTVPGEGIIKGLGEVGLPLGRGLLLLAEMSSKGALTKGSYTSESVEMARRNKDFVFGFIAQHKMNEHDDEDFVVMSPGVGLDVKGDGLGQQYRTPHEVIVESGGDIIIVGRGIYGNPDQVEAQAKRYRQAGWDAYLERVRLHKK</sequence>
<name>PYRF_MUCCL</name>
<keyword id="KW-0210">Decarboxylase</keyword>
<keyword id="KW-0456">Lyase</keyword>
<keyword id="KW-0665">Pyrimidine biosynthesis</keyword>
<feature type="chain" id="PRO_0000134679" description="Orotidine 5'-phosphate decarboxylase">
    <location>
        <begin position="1"/>
        <end position="265"/>
    </location>
</feature>
<feature type="active site" description="Proton donor" evidence="2">
    <location>
        <position position="93"/>
    </location>
</feature>
<feature type="binding site" evidence="1">
    <location>
        <position position="38"/>
    </location>
    <ligand>
        <name>substrate</name>
    </ligand>
</feature>
<feature type="binding site" evidence="1">
    <location>
        <begin position="60"/>
        <end position="62"/>
    </location>
    <ligand>
        <name>substrate</name>
    </ligand>
</feature>
<feature type="binding site" evidence="1">
    <location>
        <begin position="91"/>
        <end position="100"/>
    </location>
    <ligand>
        <name>substrate</name>
    </ligand>
</feature>
<feature type="binding site" evidence="1">
    <location>
        <position position="213"/>
    </location>
    <ligand>
        <name>substrate</name>
    </ligand>
</feature>
<feature type="binding site" evidence="1">
    <location>
        <position position="232"/>
    </location>
    <ligand>
        <name>substrate</name>
    </ligand>
</feature>
<evidence type="ECO:0000250" key="1"/>
<evidence type="ECO:0000255" key="2">
    <source>
        <dbReference type="PROSITE-ProRule" id="PRU10110"/>
    </source>
</evidence>
<evidence type="ECO:0000305" key="3"/>